<reference key="1">
    <citation type="journal article" date="1998" name="Nature">
        <title>Deciphering the biology of Mycobacterium tuberculosis from the complete genome sequence.</title>
        <authorList>
            <person name="Cole S.T."/>
            <person name="Brosch R."/>
            <person name="Parkhill J."/>
            <person name="Garnier T."/>
            <person name="Churcher C.M."/>
            <person name="Harris D.E."/>
            <person name="Gordon S.V."/>
            <person name="Eiglmeier K."/>
            <person name="Gas S."/>
            <person name="Barry C.E. III"/>
            <person name="Tekaia F."/>
            <person name="Badcock K."/>
            <person name="Basham D."/>
            <person name="Brown D."/>
            <person name="Chillingworth T."/>
            <person name="Connor R."/>
            <person name="Davies R.M."/>
            <person name="Devlin K."/>
            <person name="Feltwell T."/>
            <person name="Gentles S."/>
            <person name="Hamlin N."/>
            <person name="Holroyd S."/>
            <person name="Hornsby T."/>
            <person name="Jagels K."/>
            <person name="Krogh A."/>
            <person name="McLean J."/>
            <person name="Moule S."/>
            <person name="Murphy L.D."/>
            <person name="Oliver S."/>
            <person name="Osborne J."/>
            <person name="Quail M.A."/>
            <person name="Rajandream M.A."/>
            <person name="Rogers J."/>
            <person name="Rutter S."/>
            <person name="Seeger K."/>
            <person name="Skelton S."/>
            <person name="Squares S."/>
            <person name="Squares R."/>
            <person name="Sulston J.E."/>
            <person name="Taylor K."/>
            <person name="Whitehead S."/>
            <person name="Barrell B.G."/>
        </authorList>
    </citation>
    <scope>NUCLEOTIDE SEQUENCE [LARGE SCALE GENOMIC DNA]</scope>
    <source>
        <strain>ATCC 25618 / H37Rv</strain>
    </source>
</reference>
<reference key="2">
    <citation type="journal article" date="2011" name="Mol. Cell. Proteomics">
        <title>Proteogenomic analysis of Mycobacterium tuberculosis by high resolution mass spectrometry.</title>
        <authorList>
            <person name="Kelkar D.S."/>
            <person name="Kumar D."/>
            <person name="Kumar P."/>
            <person name="Balakrishnan L."/>
            <person name="Muthusamy B."/>
            <person name="Yadav A.K."/>
            <person name="Shrivastava P."/>
            <person name="Marimuthu A."/>
            <person name="Anand S."/>
            <person name="Sundaram H."/>
            <person name="Kingsbury R."/>
            <person name="Harsha H.C."/>
            <person name="Nair B."/>
            <person name="Prasad T.S."/>
            <person name="Chauhan D.S."/>
            <person name="Katoch K."/>
            <person name="Katoch V.M."/>
            <person name="Kumar P."/>
            <person name="Chaerkady R."/>
            <person name="Ramachandran S."/>
            <person name="Dash D."/>
            <person name="Pandey A."/>
        </authorList>
    </citation>
    <scope>IDENTIFICATION BY MASS SPECTROMETRY [LARGE SCALE ANALYSIS]</scope>
    <source>
        <strain>ATCC 25618 / H37Rv</strain>
    </source>
</reference>
<keyword id="KW-0028">Amino-acid biosynthesis</keyword>
<keyword id="KW-0061">Asparagine biosynthesis</keyword>
<keyword id="KW-0067">ATP-binding</keyword>
<keyword id="KW-0315">Glutamine amidotransferase</keyword>
<keyword id="KW-0436">Ligase</keyword>
<keyword id="KW-0547">Nucleotide-binding</keyword>
<keyword id="KW-1185">Reference proteome</keyword>
<feature type="initiator methionine" description="Removed" evidence="1">
    <location>
        <position position="1"/>
    </location>
</feature>
<feature type="chain" id="PRO_0000056935" description="Putative asparagine synthetase [glutamine-hydrolyzing]">
    <location>
        <begin position="2"/>
        <end position="652"/>
    </location>
</feature>
<feature type="domain" description="Glutamine amidotransferase type-2" evidence="2">
    <location>
        <begin position="2"/>
        <end position="231"/>
    </location>
</feature>
<feature type="active site" description="For GATase activity" evidence="1">
    <location>
        <position position="2"/>
    </location>
</feature>
<feature type="binding site" evidence="1">
    <location>
        <begin position="60"/>
        <end position="64"/>
    </location>
    <ligand>
        <name>L-glutamine</name>
        <dbReference type="ChEBI" id="CHEBI:58359"/>
    </ligand>
</feature>
<feature type="binding site" evidence="1">
    <location>
        <begin position="89"/>
        <end position="91"/>
    </location>
    <ligand>
        <name>L-glutamine</name>
        <dbReference type="ChEBI" id="CHEBI:58359"/>
    </ligand>
</feature>
<feature type="binding site" evidence="1">
    <location>
        <position position="115"/>
    </location>
    <ligand>
        <name>L-glutamine</name>
        <dbReference type="ChEBI" id="CHEBI:58359"/>
    </ligand>
</feature>
<feature type="binding site" evidence="1">
    <location>
        <begin position="382"/>
        <end position="383"/>
    </location>
    <ligand>
        <name>ATP</name>
        <dbReference type="ChEBI" id="CHEBI:30616"/>
    </ligand>
</feature>
<feature type="site" description="Important for beta-aspartyl-AMP intermediate formation" evidence="1">
    <location>
        <position position="384"/>
    </location>
</feature>
<dbReference type="EC" id="6.3.5.4"/>
<dbReference type="EMBL" id="AL123456">
    <property type="protein sequence ID" value="CCP44978.1"/>
    <property type="molecule type" value="Genomic_DNA"/>
</dbReference>
<dbReference type="PIR" id="B70785">
    <property type="entry name" value="B70785"/>
</dbReference>
<dbReference type="RefSeq" id="NP_216717.1">
    <property type="nucleotide sequence ID" value="NC_000962.3"/>
</dbReference>
<dbReference type="RefSeq" id="WP_003411413.1">
    <property type="nucleotide sequence ID" value="NZ_NVQJ01000008.1"/>
</dbReference>
<dbReference type="SMR" id="P9WN33"/>
<dbReference type="FunCoup" id="P9WN33">
    <property type="interactions" value="349"/>
</dbReference>
<dbReference type="STRING" id="83332.Rv2201"/>
<dbReference type="PaxDb" id="83332-Rv2201"/>
<dbReference type="DNASU" id="888472"/>
<dbReference type="GeneID" id="888472"/>
<dbReference type="KEGG" id="mtu:Rv2201"/>
<dbReference type="KEGG" id="mtv:RVBD_2201"/>
<dbReference type="TubercuList" id="Rv2201"/>
<dbReference type="eggNOG" id="COG0367">
    <property type="taxonomic scope" value="Bacteria"/>
</dbReference>
<dbReference type="InParanoid" id="P9WN33"/>
<dbReference type="OrthoDB" id="9763290at2"/>
<dbReference type="PhylomeDB" id="P9WN33"/>
<dbReference type="UniPathway" id="UPA00134">
    <property type="reaction ID" value="UER00195"/>
</dbReference>
<dbReference type="Proteomes" id="UP000001584">
    <property type="component" value="Chromosome"/>
</dbReference>
<dbReference type="GO" id="GO:0005829">
    <property type="term" value="C:cytosol"/>
    <property type="evidence" value="ECO:0007005"/>
    <property type="project" value="MTBBASE"/>
</dbReference>
<dbReference type="GO" id="GO:0005576">
    <property type="term" value="C:extracellular region"/>
    <property type="evidence" value="ECO:0007005"/>
    <property type="project" value="MTBBASE"/>
</dbReference>
<dbReference type="GO" id="GO:0005886">
    <property type="term" value="C:plasma membrane"/>
    <property type="evidence" value="ECO:0007005"/>
    <property type="project" value="MTBBASE"/>
</dbReference>
<dbReference type="GO" id="GO:0004066">
    <property type="term" value="F:asparagine synthase (glutamine-hydrolyzing) activity"/>
    <property type="evidence" value="ECO:0007669"/>
    <property type="project" value="UniProtKB-EC"/>
</dbReference>
<dbReference type="GO" id="GO:0005524">
    <property type="term" value="F:ATP binding"/>
    <property type="evidence" value="ECO:0007669"/>
    <property type="project" value="UniProtKB-KW"/>
</dbReference>
<dbReference type="GO" id="GO:0070981">
    <property type="term" value="P:L-asparagine biosynthetic process"/>
    <property type="evidence" value="ECO:0007669"/>
    <property type="project" value="UniProtKB-UniPathway"/>
</dbReference>
<dbReference type="CDD" id="cd01991">
    <property type="entry name" value="Asn_synthase_B_C"/>
    <property type="match status" value="1"/>
</dbReference>
<dbReference type="CDD" id="cd00712">
    <property type="entry name" value="AsnB"/>
    <property type="match status" value="1"/>
</dbReference>
<dbReference type="Gene3D" id="3.60.20.10">
    <property type="entry name" value="Glutamine Phosphoribosylpyrophosphate, subunit 1, domain 1"/>
    <property type="match status" value="1"/>
</dbReference>
<dbReference type="Gene3D" id="3.40.50.620">
    <property type="entry name" value="HUPs"/>
    <property type="match status" value="1"/>
</dbReference>
<dbReference type="InterPro" id="IPR006426">
    <property type="entry name" value="Asn_synth_AEB"/>
</dbReference>
<dbReference type="InterPro" id="IPR001962">
    <property type="entry name" value="Asn_synthase"/>
</dbReference>
<dbReference type="InterPro" id="IPR051786">
    <property type="entry name" value="ASN_synthetase/amidase"/>
</dbReference>
<dbReference type="InterPro" id="IPR033738">
    <property type="entry name" value="AsnB_N"/>
</dbReference>
<dbReference type="InterPro" id="IPR017932">
    <property type="entry name" value="GATase_2_dom"/>
</dbReference>
<dbReference type="InterPro" id="IPR029055">
    <property type="entry name" value="Ntn_hydrolases_N"/>
</dbReference>
<dbReference type="InterPro" id="IPR014729">
    <property type="entry name" value="Rossmann-like_a/b/a_fold"/>
</dbReference>
<dbReference type="NCBIfam" id="TIGR01536">
    <property type="entry name" value="asn_synth_AEB"/>
    <property type="match status" value="1"/>
</dbReference>
<dbReference type="PANTHER" id="PTHR43284:SF1">
    <property type="entry name" value="ASPARAGINE SYNTHETASE"/>
    <property type="match status" value="1"/>
</dbReference>
<dbReference type="PANTHER" id="PTHR43284">
    <property type="entry name" value="ASPARAGINE SYNTHETASE (GLUTAMINE-HYDROLYZING)"/>
    <property type="match status" value="1"/>
</dbReference>
<dbReference type="Pfam" id="PF00733">
    <property type="entry name" value="Asn_synthase"/>
    <property type="match status" value="1"/>
</dbReference>
<dbReference type="Pfam" id="PF13537">
    <property type="entry name" value="GATase_7"/>
    <property type="match status" value="1"/>
</dbReference>
<dbReference type="PIRSF" id="PIRSF001589">
    <property type="entry name" value="Asn_synthetase_glu-h"/>
    <property type="match status" value="1"/>
</dbReference>
<dbReference type="SUPFAM" id="SSF52402">
    <property type="entry name" value="Adenine nucleotide alpha hydrolases-like"/>
    <property type="match status" value="1"/>
</dbReference>
<dbReference type="SUPFAM" id="SSF56235">
    <property type="entry name" value="N-terminal nucleophile aminohydrolases (Ntn hydrolases)"/>
    <property type="match status" value="1"/>
</dbReference>
<dbReference type="PROSITE" id="PS51278">
    <property type="entry name" value="GATASE_TYPE_2"/>
    <property type="match status" value="1"/>
</dbReference>
<gene>
    <name type="primary">asnB</name>
    <name type="ordered locus">Rv2201</name>
    <name type="ORF">MTCY190.12</name>
</gene>
<proteinExistence type="evidence at protein level"/>
<accession>P9WN33</accession>
<accession>L0TAH2</accession>
<accession>P64247</accession>
<accession>Q10374</accession>
<name>ASNH_MYCTU</name>
<protein>
    <recommendedName>
        <fullName>Putative asparagine synthetase [glutamine-hydrolyzing]</fullName>
        <ecNumber>6.3.5.4</ecNumber>
    </recommendedName>
</protein>
<organism>
    <name type="scientific">Mycobacterium tuberculosis (strain ATCC 25618 / H37Rv)</name>
    <dbReference type="NCBI Taxonomy" id="83332"/>
    <lineage>
        <taxon>Bacteria</taxon>
        <taxon>Bacillati</taxon>
        <taxon>Actinomycetota</taxon>
        <taxon>Actinomycetes</taxon>
        <taxon>Mycobacteriales</taxon>
        <taxon>Mycobacteriaceae</taxon>
        <taxon>Mycobacterium</taxon>
        <taxon>Mycobacterium tuberculosis complex</taxon>
    </lineage>
</organism>
<evidence type="ECO:0000250" key="1"/>
<evidence type="ECO:0000255" key="2">
    <source>
        <dbReference type="PROSITE-ProRule" id="PRU00609"/>
    </source>
</evidence>
<evidence type="ECO:0000305" key="3"/>
<sequence>MCGLLAFVAAPAGAAGPEGADAASAIARASHLMRHRGPDESGTWHAVDGASGGVVFGFNRLSIIDIAHSHQPLRWGPPEAPDRYVLVFNGEIYNYLELRDELRTQHGAVFATDGDGEAILAGYHHWGTEVLQRLRGMFAFALWDTVTRELFCARDPFGIKPLFIATGAGGTAVASEKKCLLDLVELVGFDTEIDHRALQHYTVLQYVPEPETLHRGVRRLESGCFARIRADQLAPVITRYFVPRFAASPITNDNDQARYDEITAVLEDSVAKHMRADVTVGAFLSGGIDSTAIAALAIRHNPRLITFTTGFEREGFSEIDVAVASAEAIGARHIAKVVSADEFVAALPEIVWYLDEPVADPALVPLFFVAREARKHVKVVLSGEGADELFGGYTIYREPLSLRPFDYLPKPLRRSMGKVSKPLPEGMRGKSLLHRGSLTLEERYYGNARSFSGAQLREVLPGFRPDWTHTDVTAPVYAESAGWDPVARMQHIDLFTWLRGDILVKADKITMANSLELRVPFLDPEVFAVASRLPAGAKITRTTTKYALRRALEPIVPAHVLHRPKLGFPVPIRHWLRAGELLEWAYATVGSSQAGHLVDIAAVYRMLDEHRCGSSDHSRRLWTMLIFMLWHAIFVEHSVVPQISEPQYPVQL</sequence>
<comment type="catalytic activity">
    <reaction>
        <text>L-aspartate + L-glutamine + ATP + H2O = L-asparagine + L-glutamate + AMP + diphosphate + H(+)</text>
        <dbReference type="Rhea" id="RHEA:12228"/>
        <dbReference type="ChEBI" id="CHEBI:15377"/>
        <dbReference type="ChEBI" id="CHEBI:15378"/>
        <dbReference type="ChEBI" id="CHEBI:29985"/>
        <dbReference type="ChEBI" id="CHEBI:29991"/>
        <dbReference type="ChEBI" id="CHEBI:30616"/>
        <dbReference type="ChEBI" id="CHEBI:33019"/>
        <dbReference type="ChEBI" id="CHEBI:58048"/>
        <dbReference type="ChEBI" id="CHEBI:58359"/>
        <dbReference type="ChEBI" id="CHEBI:456215"/>
        <dbReference type="EC" id="6.3.5.4"/>
    </reaction>
</comment>
<comment type="pathway">
    <text>Amino-acid biosynthesis; L-asparagine biosynthesis; L-asparagine from L-aspartate (L-Gln route): step 1/1.</text>
</comment>
<comment type="similarity">
    <text evidence="3">Belongs to the asparagine synthetase family.</text>
</comment>